<evidence type="ECO:0000255" key="1">
    <source>
        <dbReference type="HAMAP-Rule" id="MF_00626"/>
    </source>
</evidence>
<feature type="propeptide" id="PRO_0000026866" evidence="1">
    <location>
        <begin position="1"/>
        <end position="16"/>
    </location>
</feature>
<feature type="chain" id="PRO_0000026867" description="Germination protease">
    <location>
        <begin position="17"/>
        <end position="368"/>
    </location>
</feature>
<name>GPR_BACLD</name>
<reference key="1">
    <citation type="journal article" date="2004" name="J. Mol. Microbiol. Biotechnol.">
        <title>The complete genome sequence of Bacillus licheniformis DSM13, an organism with great industrial potential.</title>
        <authorList>
            <person name="Veith B."/>
            <person name="Herzberg C."/>
            <person name="Steckel S."/>
            <person name="Feesche J."/>
            <person name="Maurer K.H."/>
            <person name="Ehrenreich P."/>
            <person name="Baeumer S."/>
            <person name="Henne A."/>
            <person name="Liesegang H."/>
            <person name="Merkl R."/>
            <person name="Ehrenreich A."/>
            <person name="Gottschalk G."/>
        </authorList>
    </citation>
    <scope>NUCLEOTIDE SEQUENCE [LARGE SCALE GENOMIC DNA]</scope>
    <source>
        <strain>ATCC 14580 / DSM 13 / JCM 2505 / CCUG 7422 / NBRC 12200 / NCIMB 9375 / NCTC 10341 / NRRL NRS-1264 / Gibson 46</strain>
    </source>
</reference>
<reference key="2">
    <citation type="journal article" date="2004" name="Genome Biol.">
        <title>Complete genome sequence of the industrial bacterium Bacillus licheniformis and comparisons with closely related Bacillus species.</title>
        <authorList>
            <person name="Rey M.W."/>
            <person name="Ramaiya P."/>
            <person name="Nelson B.A."/>
            <person name="Brody-Karpin S.D."/>
            <person name="Zaretsky E.J."/>
            <person name="Tang M."/>
            <person name="Lopez de Leon A."/>
            <person name="Xiang H."/>
            <person name="Gusti V."/>
            <person name="Clausen I.G."/>
            <person name="Olsen P.B."/>
            <person name="Rasmussen M.D."/>
            <person name="Andersen J.T."/>
            <person name="Joergensen P.L."/>
            <person name="Larsen T.S."/>
            <person name="Sorokin A."/>
            <person name="Bolotin A."/>
            <person name="Lapidus A."/>
            <person name="Galleron N."/>
            <person name="Ehrlich S.D."/>
            <person name="Berka R.M."/>
        </authorList>
    </citation>
    <scope>NUCLEOTIDE SEQUENCE [LARGE SCALE GENOMIC DNA]</scope>
    <source>
        <strain>ATCC 14580 / DSM 13 / JCM 2505 / CCUG 7422 / NBRC 12200 / NCIMB 9375 / NCTC 10341 / NRRL NRS-1264 / Gibson 46</strain>
    </source>
</reference>
<organism>
    <name type="scientific">Bacillus licheniformis (strain ATCC 14580 / DSM 13 / JCM 2505 / CCUG 7422 / NBRC 12200 / NCIMB 9375 / NCTC 10341 / NRRL NRS-1264 / Gibson 46)</name>
    <dbReference type="NCBI Taxonomy" id="279010"/>
    <lineage>
        <taxon>Bacteria</taxon>
        <taxon>Bacillati</taxon>
        <taxon>Bacillota</taxon>
        <taxon>Bacilli</taxon>
        <taxon>Bacillales</taxon>
        <taxon>Bacillaceae</taxon>
        <taxon>Bacillus</taxon>
    </lineage>
</organism>
<accession>Q65H47</accession>
<accession>Q62SK3</accession>
<comment type="function">
    <text evidence="1">Initiates the rapid degradation of small, acid-soluble proteins during spore germination.</text>
</comment>
<comment type="catalytic activity">
    <reaction evidence="1">
        <text>Endopeptidase action with P4 Glu or Asp, P1 preferably Glu &gt; Asp, P1' hydrophobic and P2' Ala.</text>
        <dbReference type="EC" id="3.4.24.78"/>
    </reaction>
</comment>
<comment type="subunit">
    <text evidence="1">Homotetramer.</text>
</comment>
<comment type="PTM">
    <text evidence="1">Autoproteolytically processed. The inactive tetrameric zymogen termed p46 autoprocesses to a smaller form termed p41, which is active only during spore germination.</text>
</comment>
<comment type="similarity">
    <text evidence="1">Belongs to the peptidase A25 family.</text>
</comment>
<gene>
    <name evidence="1" type="primary">gpr</name>
    <name type="ordered locus">BLi02746</name>
    <name type="ordered locus">BL02089</name>
</gene>
<keyword id="KW-0378">Hydrolase</keyword>
<keyword id="KW-0645">Protease</keyword>
<keyword id="KW-1185">Reference proteome</keyword>
<keyword id="KW-0865">Zymogen</keyword>
<dbReference type="EC" id="3.4.24.78" evidence="1"/>
<dbReference type="EMBL" id="AE017333">
    <property type="protein sequence ID" value="AAU41617.1"/>
    <property type="molecule type" value="Genomic_DNA"/>
</dbReference>
<dbReference type="EMBL" id="CP000002">
    <property type="protein sequence ID" value="AAU24256.1"/>
    <property type="molecule type" value="Genomic_DNA"/>
</dbReference>
<dbReference type="RefSeq" id="WP_009327867.1">
    <property type="nucleotide sequence ID" value="NC_006322.1"/>
</dbReference>
<dbReference type="SMR" id="Q65H47"/>
<dbReference type="STRING" id="279010.BL02089"/>
<dbReference type="MEROPS" id="A25.001"/>
<dbReference type="GeneID" id="92860663"/>
<dbReference type="KEGG" id="bld:BLi02746"/>
<dbReference type="KEGG" id="bli:BL02089"/>
<dbReference type="PATRIC" id="fig|279010.13.peg.2790"/>
<dbReference type="eggNOG" id="COG0680">
    <property type="taxonomic scope" value="Bacteria"/>
</dbReference>
<dbReference type="HOGENOM" id="CLU_055087_1_0_9"/>
<dbReference type="Proteomes" id="UP000000606">
    <property type="component" value="Chromosome"/>
</dbReference>
<dbReference type="GO" id="GO:0004222">
    <property type="term" value="F:metalloendopeptidase activity"/>
    <property type="evidence" value="ECO:0007669"/>
    <property type="project" value="UniProtKB-UniRule"/>
</dbReference>
<dbReference type="GO" id="GO:0006508">
    <property type="term" value="P:proteolysis"/>
    <property type="evidence" value="ECO:0007669"/>
    <property type="project" value="UniProtKB-UniRule"/>
</dbReference>
<dbReference type="GO" id="GO:0009847">
    <property type="term" value="P:spore germination"/>
    <property type="evidence" value="ECO:0007669"/>
    <property type="project" value="UniProtKB-UniRule"/>
</dbReference>
<dbReference type="Gene3D" id="3.40.50.1450">
    <property type="entry name" value="HybD-like"/>
    <property type="match status" value="2"/>
</dbReference>
<dbReference type="HAMAP" id="MF_00626">
    <property type="entry name" value="Germination_prot"/>
    <property type="match status" value="1"/>
</dbReference>
<dbReference type="InterPro" id="IPR023430">
    <property type="entry name" value="Pept_HybD-like_dom_sf"/>
</dbReference>
<dbReference type="InterPro" id="IPR005080">
    <property type="entry name" value="Peptidase_A25"/>
</dbReference>
<dbReference type="NCBIfam" id="TIGR01441">
    <property type="entry name" value="GPR"/>
    <property type="match status" value="1"/>
</dbReference>
<dbReference type="Pfam" id="PF03418">
    <property type="entry name" value="Peptidase_A25"/>
    <property type="match status" value="1"/>
</dbReference>
<dbReference type="PIRSF" id="PIRSF019549">
    <property type="entry name" value="Peptidase_A25"/>
    <property type="match status" value="1"/>
</dbReference>
<dbReference type="SUPFAM" id="SSF53163">
    <property type="entry name" value="HybD-like"/>
    <property type="match status" value="1"/>
</dbReference>
<protein>
    <recommendedName>
        <fullName evidence="1">Germination protease</fullName>
        <ecNumber evidence="1">3.4.24.78</ecNumber>
    </recommendedName>
    <alternativeName>
        <fullName evidence="1">GPR endopeptidase</fullName>
    </alternativeName>
    <alternativeName>
        <fullName evidence="1">Germination proteinase</fullName>
    </alternativeName>
    <alternativeName>
        <fullName evidence="1">Spore protease</fullName>
    </alternativeName>
</protein>
<sequence length="368" mass="40443">MEKKKLDLSQYAVRTDLAVEARDLAEEKEASPKKELKGFTVKEYEKDGIKIQTMDIDEEGAKLSGKKAGRYLTFETQGIRQQDSVLQEKVVDVFAKEFSSFLDYLGIPRDASCLIVGLGNWNVTPDSLGPLVTENLLVTRHLFQLQPENVEEGYRPVSALSPGVMGLTGIETSDIIQGVIDRSKPDFVIAIDALASRGIERVNSTIQISDSGIHPGSGVGNKRKELSKDTLGIPVIAIGVPTVVDAVTITSDTIDYMLKHFGREMRDDSPSRSLVPAGMSFGKRKVLTEEDLPDEEHRKSFLGIVGGLAEDEKRQLIHEVLAPLGHNLMVTPKEVDTFIDDMANVIANGLNTALHENVSQDNKGMYNH</sequence>
<proteinExistence type="inferred from homology"/>